<proteinExistence type="inferred from homology"/>
<feature type="chain" id="PRO_0000113016" description="Ornithine carbamoyltransferase, catabolic">
    <location>
        <begin position="1"/>
        <end position="336"/>
    </location>
</feature>
<feature type="binding site" evidence="2">
    <location>
        <begin position="62"/>
        <end position="65"/>
    </location>
    <ligand>
        <name>carbamoyl phosphate</name>
        <dbReference type="ChEBI" id="CHEBI:58228"/>
    </ligand>
</feature>
<feature type="binding site" evidence="2">
    <location>
        <position position="89"/>
    </location>
    <ligand>
        <name>carbamoyl phosphate</name>
        <dbReference type="ChEBI" id="CHEBI:58228"/>
    </ligand>
</feature>
<feature type="binding site" evidence="2">
    <location>
        <position position="113"/>
    </location>
    <ligand>
        <name>carbamoyl phosphate</name>
        <dbReference type="ChEBI" id="CHEBI:58228"/>
    </ligand>
</feature>
<feature type="binding site" evidence="2">
    <location>
        <begin position="140"/>
        <end position="143"/>
    </location>
    <ligand>
        <name>carbamoyl phosphate</name>
        <dbReference type="ChEBI" id="CHEBI:58228"/>
    </ligand>
</feature>
<feature type="binding site" evidence="2">
    <location>
        <position position="172"/>
    </location>
    <ligand>
        <name>L-ornithine</name>
        <dbReference type="ChEBI" id="CHEBI:46911"/>
    </ligand>
</feature>
<feature type="binding site" evidence="2">
    <location>
        <position position="236"/>
    </location>
    <ligand>
        <name>L-ornithine</name>
        <dbReference type="ChEBI" id="CHEBI:46911"/>
    </ligand>
</feature>
<feature type="binding site" evidence="2">
    <location>
        <begin position="240"/>
        <end position="241"/>
    </location>
    <ligand>
        <name>L-ornithine</name>
        <dbReference type="ChEBI" id="CHEBI:46911"/>
    </ligand>
</feature>
<feature type="binding site" evidence="2">
    <location>
        <begin position="277"/>
        <end position="278"/>
    </location>
    <ligand>
        <name>carbamoyl phosphate</name>
        <dbReference type="ChEBI" id="CHEBI:58228"/>
    </ligand>
</feature>
<feature type="binding site" evidence="2">
    <location>
        <position position="322"/>
    </location>
    <ligand>
        <name>carbamoyl phosphate</name>
        <dbReference type="ChEBI" id="CHEBI:58228"/>
    </ligand>
</feature>
<dbReference type="EC" id="2.1.3.3" evidence="2"/>
<dbReference type="EMBL" id="BX571856">
    <property type="protein sequence ID" value="CAG41691.1"/>
    <property type="molecule type" value="Genomic_DNA"/>
</dbReference>
<dbReference type="SMR" id="Q6GDG8"/>
<dbReference type="KEGG" id="sar:SAR2713"/>
<dbReference type="HOGENOM" id="CLU_043846_3_1_9"/>
<dbReference type="UniPathway" id="UPA00254">
    <property type="reaction ID" value="UER00365"/>
</dbReference>
<dbReference type="Proteomes" id="UP000000596">
    <property type="component" value="Chromosome"/>
</dbReference>
<dbReference type="GO" id="GO:0005737">
    <property type="term" value="C:cytoplasm"/>
    <property type="evidence" value="ECO:0007669"/>
    <property type="project" value="UniProtKB-SubCell"/>
</dbReference>
<dbReference type="GO" id="GO:0016597">
    <property type="term" value="F:amino acid binding"/>
    <property type="evidence" value="ECO:0007669"/>
    <property type="project" value="InterPro"/>
</dbReference>
<dbReference type="GO" id="GO:0004585">
    <property type="term" value="F:ornithine carbamoyltransferase activity"/>
    <property type="evidence" value="ECO:0007669"/>
    <property type="project" value="UniProtKB-UniRule"/>
</dbReference>
<dbReference type="GO" id="GO:0042450">
    <property type="term" value="P:arginine biosynthetic process via ornithine"/>
    <property type="evidence" value="ECO:0007669"/>
    <property type="project" value="TreeGrafter"/>
</dbReference>
<dbReference type="GO" id="GO:0019547">
    <property type="term" value="P:arginine catabolic process to ornithine"/>
    <property type="evidence" value="ECO:0007669"/>
    <property type="project" value="UniProtKB-UniPathway"/>
</dbReference>
<dbReference type="GO" id="GO:0019240">
    <property type="term" value="P:citrulline biosynthetic process"/>
    <property type="evidence" value="ECO:0007669"/>
    <property type="project" value="TreeGrafter"/>
</dbReference>
<dbReference type="GO" id="GO:0006526">
    <property type="term" value="P:L-arginine biosynthetic process"/>
    <property type="evidence" value="ECO:0007669"/>
    <property type="project" value="UniProtKB-UniRule"/>
</dbReference>
<dbReference type="FunFam" id="3.40.50.1370:FF:000008">
    <property type="entry name" value="Ornithine carbamoyltransferase"/>
    <property type="match status" value="1"/>
</dbReference>
<dbReference type="Gene3D" id="3.40.50.1370">
    <property type="entry name" value="Aspartate/ornithine carbamoyltransferase"/>
    <property type="match status" value="2"/>
</dbReference>
<dbReference type="HAMAP" id="MF_01109">
    <property type="entry name" value="OTCase"/>
    <property type="match status" value="1"/>
</dbReference>
<dbReference type="InterPro" id="IPR006132">
    <property type="entry name" value="Asp/Orn_carbamoyltranf_P-bd"/>
</dbReference>
<dbReference type="InterPro" id="IPR006130">
    <property type="entry name" value="Asp/Orn_carbamoylTrfase"/>
</dbReference>
<dbReference type="InterPro" id="IPR036901">
    <property type="entry name" value="Asp/Orn_carbamoylTrfase_sf"/>
</dbReference>
<dbReference type="InterPro" id="IPR006131">
    <property type="entry name" value="Asp_carbamoyltransf_Asp/Orn-bd"/>
</dbReference>
<dbReference type="InterPro" id="IPR002292">
    <property type="entry name" value="Orn/put_carbamltrans"/>
</dbReference>
<dbReference type="InterPro" id="IPR024904">
    <property type="entry name" value="OTCase_ArgI"/>
</dbReference>
<dbReference type="NCBIfam" id="TIGR00658">
    <property type="entry name" value="orni_carb_tr"/>
    <property type="match status" value="1"/>
</dbReference>
<dbReference type="NCBIfam" id="NF001986">
    <property type="entry name" value="PRK00779.1"/>
    <property type="match status" value="1"/>
</dbReference>
<dbReference type="PANTHER" id="PTHR45753:SF1">
    <property type="entry name" value="ORNITHINE CARBAMOYLTRANSFERASE, CATABOLIC"/>
    <property type="match status" value="1"/>
</dbReference>
<dbReference type="PANTHER" id="PTHR45753">
    <property type="entry name" value="ORNITHINE CARBAMOYLTRANSFERASE, MITOCHONDRIAL"/>
    <property type="match status" value="1"/>
</dbReference>
<dbReference type="Pfam" id="PF00185">
    <property type="entry name" value="OTCace"/>
    <property type="match status" value="1"/>
</dbReference>
<dbReference type="Pfam" id="PF02729">
    <property type="entry name" value="OTCace_N"/>
    <property type="match status" value="1"/>
</dbReference>
<dbReference type="PRINTS" id="PR00100">
    <property type="entry name" value="AOTCASE"/>
</dbReference>
<dbReference type="PRINTS" id="PR00102">
    <property type="entry name" value="OTCASE"/>
</dbReference>
<dbReference type="SUPFAM" id="SSF53671">
    <property type="entry name" value="Aspartate/ornithine carbamoyltransferase"/>
    <property type="match status" value="1"/>
</dbReference>
<dbReference type="PROSITE" id="PS00097">
    <property type="entry name" value="CARBAMOYLTRANSFERASE"/>
    <property type="match status" value="1"/>
</dbReference>
<sequence length="336" mass="37731">MTEIQKPYDLKGRSLLKESDFTKAEFEGLIDFAITLKEYKKNGIKHHYLSGKNIALLFEKNSTRTRAAFTVASIDLGAHPEFLGKNDIQLGKKESVEDTAKVLGRMFDGIEFRGFSQQAVEDLAKFSGVPVWNGLTDDWHPTQMLADFMTIKENFGYLEGINLTYVGDGRNNIAHSLMVAGAMLGVNVRICTPKSLNPKDAYVDIAKEKASQYGGSVMITDNIAEAVENTDAIYTDVWVSMGEESEFEQRINLLKDYQVNQQLFDLTGKDSTIFLHCLPAFHDTNTLYGQEIYEKYGLAEMEVTDQIFRSEHSKVFDQAENRMHTIKAVMAATLGS</sequence>
<keyword id="KW-0056">Arginine metabolism</keyword>
<keyword id="KW-0963">Cytoplasm</keyword>
<keyword id="KW-0808">Transferase</keyword>
<reference key="1">
    <citation type="journal article" date="2004" name="Proc. Natl. Acad. Sci. U.S.A.">
        <title>Complete genomes of two clinical Staphylococcus aureus strains: evidence for the rapid evolution of virulence and drug resistance.</title>
        <authorList>
            <person name="Holden M.T.G."/>
            <person name="Feil E.J."/>
            <person name="Lindsay J.A."/>
            <person name="Peacock S.J."/>
            <person name="Day N.P.J."/>
            <person name="Enright M.C."/>
            <person name="Foster T.J."/>
            <person name="Moore C.E."/>
            <person name="Hurst L."/>
            <person name="Atkin R."/>
            <person name="Barron A."/>
            <person name="Bason N."/>
            <person name="Bentley S.D."/>
            <person name="Chillingworth C."/>
            <person name="Chillingworth T."/>
            <person name="Churcher C."/>
            <person name="Clark L."/>
            <person name="Corton C."/>
            <person name="Cronin A."/>
            <person name="Doggett J."/>
            <person name="Dowd L."/>
            <person name="Feltwell T."/>
            <person name="Hance Z."/>
            <person name="Harris B."/>
            <person name="Hauser H."/>
            <person name="Holroyd S."/>
            <person name="Jagels K."/>
            <person name="James K.D."/>
            <person name="Lennard N."/>
            <person name="Line A."/>
            <person name="Mayes R."/>
            <person name="Moule S."/>
            <person name="Mungall K."/>
            <person name="Ormond D."/>
            <person name="Quail M.A."/>
            <person name="Rabbinowitsch E."/>
            <person name="Rutherford K.M."/>
            <person name="Sanders M."/>
            <person name="Sharp S."/>
            <person name="Simmonds M."/>
            <person name="Stevens K."/>
            <person name="Whitehead S."/>
            <person name="Barrell B.G."/>
            <person name="Spratt B.G."/>
            <person name="Parkhill J."/>
        </authorList>
    </citation>
    <scope>NUCLEOTIDE SEQUENCE [LARGE SCALE GENOMIC DNA]</scope>
    <source>
        <strain>MRSA252</strain>
    </source>
</reference>
<protein>
    <recommendedName>
        <fullName evidence="2">Ornithine carbamoyltransferase, catabolic</fullName>
        <shortName evidence="2">OTCase</shortName>
        <ecNumber evidence="2">2.1.3.3</ecNumber>
    </recommendedName>
</protein>
<organism>
    <name type="scientific">Staphylococcus aureus (strain MRSA252)</name>
    <dbReference type="NCBI Taxonomy" id="282458"/>
    <lineage>
        <taxon>Bacteria</taxon>
        <taxon>Bacillati</taxon>
        <taxon>Bacillota</taxon>
        <taxon>Bacilli</taxon>
        <taxon>Bacillales</taxon>
        <taxon>Staphylococcaceae</taxon>
        <taxon>Staphylococcus</taxon>
    </lineage>
</organism>
<accession>Q6GDG8</accession>
<gene>
    <name evidence="2" type="primary">arcB</name>
    <name type="ordered locus">SAR2713</name>
</gene>
<comment type="function">
    <text evidence="1">Reversibly catalyzes the transfer of the carbamoyl group from carbamoyl phosphate (CP) to the N(epsilon) atom of ornithine (ORN) to produce L-citrulline.</text>
</comment>
<comment type="catalytic activity">
    <reaction evidence="2">
        <text>carbamoyl phosphate + L-ornithine = L-citrulline + phosphate + H(+)</text>
        <dbReference type="Rhea" id="RHEA:19513"/>
        <dbReference type="ChEBI" id="CHEBI:15378"/>
        <dbReference type="ChEBI" id="CHEBI:43474"/>
        <dbReference type="ChEBI" id="CHEBI:46911"/>
        <dbReference type="ChEBI" id="CHEBI:57743"/>
        <dbReference type="ChEBI" id="CHEBI:58228"/>
        <dbReference type="EC" id="2.1.3.3"/>
    </reaction>
</comment>
<comment type="pathway">
    <text evidence="2">Amino-acid degradation; L-arginine degradation via ADI pathway; carbamoyl phosphate from L-arginine: step 2/2.</text>
</comment>
<comment type="subcellular location">
    <subcellularLocation>
        <location evidence="2">Cytoplasm</location>
    </subcellularLocation>
</comment>
<comment type="similarity">
    <text evidence="2">Belongs to the aspartate/ornithine carbamoyltransferase superfamily. OTCase family.</text>
</comment>
<name>OTCC_STAAR</name>
<evidence type="ECO:0000250" key="1"/>
<evidence type="ECO:0000255" key="2">
    <source>
        <dbReference type="HAMAP-Rule" id="MF_01109"/>
    </source>
</evidence>